<accession>Q8Y6B9</accession>
<organism>
    <name type="scientific">Listeria monocytogenes serovar 1/2a (strain ATCC BAA-679 / EGD-e)</name>
    <dbReference type="NCBI Taxonomy" id="169963"/>
    <lineage>
        <taxon>Bacteria</taxon>
        <taxon>Bacillati</taxon>
        <taxon>Bacillota</taxon>
        <taxon>Bacilli</taxon>
        <taxon>Bacillales</taxon>
        <taxon>Listeriaceae</taxon>
        <taxon>Listeria</taxon>
    </lineage>
</organism>
<reference key="1">
    <citation type="journal article" date="2001" name="Science">
        <title>Comparative genomics of Listeria species.</title>
        <authorList>
            <person name="Glaser P."/>
            <person name="Frangeul L."/>
            <person name="Buchrieser C."/>
            <person name="Rusniok C."/>
            <person name="Amend A."/>
            <person name="Baquero F."/>
            <person name="Berche P."/>
            <person name="Bloecker H."/>
            <person name="Brandt P."/>
            <person name="Chakraborty T."/>
            <person name="Charbit A."/>
            <person name="Chetouani F."/>
            <person name="Couve E."/>
            <person name="de Daruvar A."/>
            <person name="Dehoux P."/>
            <person name="Domann E."/>
            <person name="Dominguez-Bernal G."/>
            <person name="Duchaud E."/>
            <person name="Durant L."/>
            <person name="Dussurget O."/>
            <person name="Entian K.-D."/>
            <person name="Fsihi H."/>
            <person name="Garcia-del Portillo F."/>
            <person name="Garrido P."/>
            <person name="Gautier L."/>
            <person name="Goebel W."/>
            <person name="Gomez-Lopez N."/>
            <person name="Hain T."/>
            <person name="Hauf J."/>
            <person name="Jackson D."/>
            <person name="Jones L.-M."/>
            <person name="Kaerst U."/>
            <person name="Kreft J."/>
            <person name="Kuhn M."/>
            <person name="Kunst F."/>
            <person name="Kurapkat G."/>
            <person name="Madueno E."/>
            <person name="Maitournam A."/>
            <person name="Mata Vicente J."/>
            <person name="Ng E."/>
            <person name="Nedjari H."/>
            <person name="Nordsiek G."/>
            <person name="Novella S."/>
            <person name="de Pablos B."/>
            <person name="Perez-Diaz J.-C."/>
            <person name="Purcell R."/>
            <person name="Remmel B."/>
            <person name="Rose M."/>
            <person name="Schlueter T."/>
            <person name="Simoes N."/>
            <person name="Tierrez A."/>
            <person name="Vazquez-Boland J.-A."/>
            <person name="Voss H."/>
            <person name="Wehland J."/>
            <person name="Cossart P."/>
        </authorList>
    </citation>
    <scope>NUCLEOTIDE SEQUENCE [LARGE SCALE GENOMIC DNA]</scope>
    <source>
        <strain>ATCC BAA-679 / EGD-e</strain>
    </source>
</reference>
<evidence type="ECO:0000255" key="1">
    <source>
        <dbReference type="HAMAP-Rule" id="MF_00137"/>
    </source>
</evidence>
<proteinExistence type="inferred from homology"/>
<dbReference type="EC" id="6.3.2.6" evidence="1"/>
<dbReference type="EMBL" id="AL591981">
    <property type="protein sequence ID" value="CAC99850.1"/>
    <property type="molecule type" value="Genomic_DNA"/>
</dbReference>
<dbReference type="PIR" id="AD1296">
    <property type="entry name" value="AD1296"/>
</dbReference>
<dbReference type="RefSeq" id="NP_465297.1">
    <property type="nucleotide sequence ID" value="NC_003210.1"/>
</dbReference>
<dbReference type="RefSeq" id="WP_010989809.1">
    <property type="nucleotide sequence ID" value="NZ_CP149495.1"/>
</dbReference>
<dbReference type="SMR" id="Q8Y6B9"/>
<dbReference type="STRING" id="169963.gene:17594454"/>
<dbReference type="PaxDb" id="169963-lmo1772"/>
<dbReference type="EnsemblBacteria" id="CAC99850">
    <property type="protein sequence ID" value="CAC99850"/>
    <property type="gene ID" value="CAC99850"/>
</dbReference>
<dbReference type="GeneID" id="985969"/>
<dbReference type="KEGG" id="lmo:lmo1772"/>
<dbReference type="PATRIC" id="fig|169963.11.peg.1816"/>
<dbReference type="eggNOG" id="COG0152">
    <property type="taxonomic scope" value="Bacteria"/>
</dbReference>
<dbReference type="HOGENOM" id="CLU_061495_2_0_9"/>
<dbReference type="OrthoDB" id="9801549at2"/>
<dbReference type="PhylomeDB" id="Q8Y6B9"/>
<dbReference type="BioCyc" id="LMON169963:LMO1772-MONOMER"/>
<dbReference type="UniPathway" id="UPA00074">
    <property type="reaction ID" value="UER00131"/>
</dbReference>
<dbReference type="Proteomes" id="UP000000817">
    <property type="component" value="Chromosome"/>
</dbReference>
<dbReference type="GO" id="GO:0005524">
    <property type="term" value="F:ATP binding"/>
    <property type="evidence" value="ECO:0007669"/>
    <property type="project" value="UniProtKB-KW"/>
</dbReference>
<dbReference type="GO" id="GO:0004639">
    <property type="term" value="F:phosphoribosylaminoimidazolesuccinocarboxamide synthase activity"/>
    <property type="evidence" value="ECO:0007669"/>
    <property type="project" value="UniProtKB-UniRule"/>
</dbReference>
<dbReference type="GO" id="GO:0006189">
    <property type="term" value="P:'de novo' IMP biosynthetic process"/>
    <property type="evidence" value="ECO:0007669"/>
    <property type="project" value="UniProtKB-UniRule"/>
</dbReference>
<dbReference type="GO" id="GO:0009236">
    <property type="term" value="P:cobalamin biosynthetic process"/>
    <property type="evidence" value="ECO:0007669"/>
    <property type="project" value="InterPro"/>
</dbReference>
<dbReference type="CDD" id="cd01415">
    <property type="entry name" value="SAICAR_synt_PurC"/>
    <property type="match status" value="1"/>
</dbReference>
<dbReference type="FunFam" id="3.30.470.20:FF:000006">
    <property type="entry name" value="Phosphoribosylaminoimidazole-succinocarboxamide synthase"/>
    <property type="match status" value="1"/>
</dbReference>
<dbReference type="Gene3D" id="3.30.470.20">
    <property type="entry name" value="ATP-grasp fold, B domain"/>
    <property type="match status" value="1"/>
</dbReference>
<dbReference type="Gene3D" id="3.30.200.20">
    <property type="entry name" value="Phosphorylase Kinase, domain 1"/>
    <property type="match status" value="1"/>
</dbReference>
<dbReference type="HAMAP" id="MF_00137">
    <property type="entry name" value="SAICAR_synth"/>
    <property type="match status" value="1"/>
</dbReference>
<dbReference type="InterPro" id="IPR028923">
    <property type="entry name" value="SAICAR_synt/ADE2_N"/>
</dbReference>
<dbReference type="InterPro" id="IPR033934">
    <property type="entry name" value="SAICAR_synt_PurC"/>
</dbReference>
<dbReference type="InterPro" id="IPR001636">
    <property type="entry name" value="SAICAR_synth"/>
</dbReference>
<dbReference type="InterPro" id="IPR050089">
    <property type="entry name" value="SAICAR_synthetase"/>
</dbReference>
<dbReference type="InterPro" id="IPR018236">
    <property type="entry name" value="SAICAR_synthetase_CS"/>
</dbReference>
<dbReference type="NCBIfam" id="TIGR00081">
    <property type="entry name" value="purC"/>
    <property type="match status" value="1"/>
</dbReference>
<dbReference type="PANTHER" id="PTHR43599">
    <property type="entry name" value="MULTIFUNCTIONAL PROTEIN ADE2"/>
    <property type="match status" value="1"/>
</dbReference>
<dbReference type="PANTHER" id="PTHR43599:SF3">
    <property type="entry name" value="SI:DKEY-6E2.2"/>
    <property type="match status" value="1"/>
</dbReference>
<dbReference type="Pfam" id="PF01259">
    <property type="entry name" value="SAICAR_synt"/>
    <property type="match status" value="1"/>
</dbReference>
<dbReference type="SUPFAM" id="SSF56104">
    <property type="entry name" value="SAICAR synthase-like"/>
    <property type="match status" value="1"/>
</dbReference>
<dbReference type="PROSITE" id="PS01057">
    <property type="entry name" value="SAICAR_SYNTHETASE_1"/>
    <property type="match status" value="1"/>
</dbReference>
<dbReference type="PROSITE" id="PS01058">
    <property type="entry name" value="SAICAR_SYNTHETASE_2"/>
    <property type="match status" value="1"/>
</dbReference>
<protein>
    <recommendedName>
        <fullName evidence="1">Phosphoribosylaminoimidazole-succinocarboxamide synthase</fullName>
        <ecNumber evidence="1">6.3.2.6</ecNumber>
    </recommendedName>
    <alternativeName>
        <fullName evidence="1">SAICAR synthetase</fullName>
    </alternativeName>
</protein>
<gene>
    <name evidence="1" type="primary">purC</name>
    <name type="ordered locus">lmo1772</name>
</gene>
<name>PUR7_LISMO</name>
<keyword id="KW-0067">ATP-binding</keyword>
<keyword id="KW-0436">Ligase</keyword>
<keyword id="KW-0547">Nucleotide-binding</keyword>
<keyword id="KW-0658">Purine biosynthesis</keyword>
<keyword id="KW-1185">Reference proteome</keyword>
<comment type="catalytic activity">
    <reaction evidence="1">
        <text>5-amino-1-(5-phospho-D-ribosyl)imidazole-4-carboxylate + L-aspartate + ATP = (2S)-2-[5-amino-1-(5-phospho-beta-D-ribosyl)imidazole-4-carboxamido]succinate + ADP + phosphate + 2 H(+)</text>
        <dbReference type="Rhea" id="RHEA:22628"/>
        <dbReference type="ChEBI" id="CHEBI:15378"/>
        <dbReference type="ChEBI" id="CHEBI:29991"/>
        <dbReference type="ChEBI" id="CHEBI:30616"/>
        <dbReference type="ChEBI" id="CHEBI:43474"/>
        <dbReference type="ChEBI" id="CHEBI:58443"/>
        <dbReference type="ChEBI" id="CHEBI:77657"/>
        <dbReference type="ChEBI" id="CHEBI:456216"/>
        <dbReference type="EC" id="6.3.2.6"/>
    </reaction>
</comment>
<comment type="pathway">
    <text evidence="1">Purine metabolism; IMP biosynthesis via de novo pathway; 5-amino-1-(5-phospho-D-ribosyl)imidazole-4-carboxamide from 5-amino-1-(5-phospho-D-ribosyl)imidazole-4-carboxylate: step 1/2.</text>
</comment>
<comment type="similarity">
    <text evidence="1">Belongs to the SAICAR synthetase family.</text>
</comment>
<feature type="chain" id="PRO_0000100841" description="Phosphoribosylaminoimidazole-succinocarboxamide synthase">
    <location>
        <begin position="1"/>
        <end position="237"/>
    </location>
</feature>
<sequence>MTNELVYEGKAKRLFKTEEAGVLRVAYKDDATALNGVRKESFAGKGELNNQITSLIFSHLAEAGIESHFIRAISETEQLVKEVSIIPLEVVVRNVMAGSLAKRLGKEEGEQIPNAIVEFYYKDDALDDPFINDDHVLYLEVATTSEMDTIRQAARSINKVLQELFNQMNITLIDFKLEFGRDAAGEILLADEISPDTCRLWDKETNQKLDKDVFRRNIGNLTDVYTEVLNRLKQVQN</sequence>